<dbReference type="EC" id="1.3.1.89" evidence="1"/>
<dbReference type="EC" id="1.3.1.-" evidence="3"/>
<dbReference type="EMBL" id="DS027059">
    <property type="protein sequence ID" value="EAW07354.1"/>
    <property type="molecule type" value="Genomic_DNA"/>
</dbReference>
<dbReference type="RefSeq" id="XP_001268780.1">
    <property type="nucleotide sequence ID" value="XM_001268779.1"/>
</dbReference>
<dbReference type="SMR" id="A1CNY3"/>
<dbReference type="STRING" id="344612.A1CNY3"/>
<dbReference type="EnsemblFungi" id="EAW07354">
    <property type="protein sequence ID" value="EAW07354"/>
    <property type="gene ID" value="ACLA_020610"/>
</dbReference>
<dbReference type="GeneID" id="4700915"/>
<dbReference type="KEGG" id="act:ACLA_020610"/>
<dbReference type="VEuPathDB" id="FungiDB:ACLA_020610"/>
<dbReference type="eggNOG" id="KOG2333">
    <property type="taxonomic scope" value="Eukaryota"/>
</dbReference>
<dbReference type="HOGENOM" id="CLU_013299_7_0_1"/>
<dbReference type="OMA" id="WSYIAEC"/>
<dbReference type="OrthoDB" id="259935at2759"/>
<dbReference type="Proteomes" id="UP000006701">
    <property type="component" value="Unassembled WGS sequence"/>
</dbReference>
<dbReference type="GO" id="GO:0005737">
    <property type="term" value="C:cytoplasm"/>
    <property type="evidence" value="ECO:0007669"/>
    <property type="project" value="UniProtKB-SubCell"/>
</dbReference>
<dbReference type="GO" id="GO:0034399">
    <property type="term" value="C:nuclear periphery"/>
    <property type="evidence" value="ECO:0007669"/>
    <property type="project" value="EnsemblFungi"/>
</dbReference>
<dbReference type="GO" id="GO:0050660">
    <property type="term" value="F:flavin adenine dinucleotide binding"/>
    <property type="evidence" value="ECO:0007669"/>
    <property type="project" value="InterPro"/>
</dbReference>
<dbReference type="GO" id="GO:0106414">
    <property type="term" value="F:mRNA dihydrouridine synthase activity"/>
    <property type="evidence" value="ECO:0007669"/>
    <property type="project" value="RHEA"/>
</dbReference>
<dbReference type="GO" id="GO:0003723">
    <property type="term" value="F:RNA binding"/>
    <property type="evidence" value="ECO:0007669"/>
    <property type="project" value="TreeGrafter"/>
</dbReference>
<dbReference type="GO" id="GO:0102265">
    <property type="term" value="F:tRNA-dihydrouridine47 synthase activity"/>
    <property type="evidence" value="ECO:0007669"/>
    <property type="project" value="UniProtKB-EC"/>
</dbReference>
<dbReference type="GO" id="GO:0008270">
    <property type="term" value="F:zinc ion binding"/>
    <property type="evidence" value="ECO:0007669"/>
    <property type="project" value="UniProtKB-KW"/>
</dbReference>
<dbReference type="GO" id="GO:0006397">
    <property type="term" value="P:mRNA processing"/>
    <property type="evidence" value="ECO:0007669"/>
    <property type="project" value="UniProtKB-KW"/>
</dbReference>
<dbReference type="CDD" id="cd02801">
    <property type="entry name" value="DUS_like_FMN"/>
    <property type="match status" value="1"/>
</dbReference>
<dbReference type="FunFam" id="3.20.20.70:FF:000145">
    <property type="entry name" value="tRNA-dihydrouridine(47) synthase [NAD(P)(+)]"/>
    <property type="match status" value="1"/>
</dbReference>
<dbReference type="Gene3D" id="3.20.20.70">
    <property type="entry name" value="Aldolase class I"/>
    <property type="match status" value="1"/>
</dbReference>
<dbReference type="Gene3D" id="4.10.1000.10">
    <property type="entry name" value="Zinc finger, CCCH-type"/>
    <property type="match status" value="1"/>
</dbReference>
<dbReference type="InterPro" id="IPR013785">
    <property type="entry name" value="Aldolase_TIM"/>
</dbReference>
<dbReference type="InterPro" id="IPR035587">
    <property type="entry name" value="DUS-like_FMN-bd"/>
</dbReference>
<dbReference type="InterPro" id="IPR018517">
    <property type="entry name" value="tRNA_hU_synthase_CS"/>
</dbReference>
<dbReference type="InterPro" id="IPR000571">
    <property type="entry name" value="Znf_CCCH"/>
</dbReference>
<dbReference type="PANTHER" id="PTHR45846">
    <property type="entry name" value="TRNA-DIHYDROURIDINE(47) SYNTHASE [NAD(P)(+)]-LIKE"/>
    <property type="match status" value="1"/>
</dbReference>
<dbReference type="PANTHER" id="PTHR45846:SF1">
    <property type="entry name" value="TRNA-DIHYDROURIDINE(47) SYNTHASE [NAD(P)(+)]-LIKE"/>
    <property type="match status" value="1"/>
</dbReference>
<dbReference type="Pfam" id="PF01207">
    <property type="entry name" value="Dus"/>
    <property type="match status" value="2"/>
</dbReference>
<dbReference type="SMART" id="SM00356">
    <property type="entry name" value="ZnF_C3H1"/>
    <property type="match status" value="2"/>
</dbReference>
<dbReference type="SUPFAM" id="SSF51395">
    <property type="entry name" value="FMN-linked oxidoreductases"/>
    <property type="match status" value="1"/>
</dbReference>
<dbReference type="PROSITE" id="PS01136">
    <property type="entry name" value="UPF0034"/>
    <property type="match status" value="1"/>
</dbReference>
<dbReference type="PROSITE" id="PS50103">
    <property type="entry name" value="ZF_C3H1"/>
    <property type="match status" value="2"/>
</dbReference>
<reference key="1">
    <citation type="journal article" date="2008" name="PLoS Genet.">
        <title>Genomic islands in the pathogenic filamentous fungus Aspergillus fumigatus.</title>
        <authorList>
            <person name="Fedorova N.D."/>
            <person name="Khaldi N."/>
            <person name="Joardar V.S."/>
            <person name="Maiti R."/>
            <person name="Amedeo P."/>
            <person name="Anderson M.J."/>
            <person name="Crabtree J."/>
            <person name="Silva J.C."/>
            <person name="Badger J.H."/>
            <person name="Albarraq A."/>
            <person name="Angiuoli S."/>
            <person name="Bussey H."/>
            <person name="Bowyer P."/>
            <person name="Cotty P.J."/>
            <person name="Dyer P.S."/>
            <person name="Egan A."/>
            <person name="Galens K."/>
            <person name="Fraser-Liggett C.M."/>
            <person name="Haas B.J."/>
            <person name="Inman J.M."/>
            <person name="Kent R."/>
            <person name="Lemieux S."/>
            <person name="Malavazi I."/>
            <person name="Orvis J."/>
            <person name="Roemer T."/>
            <person name="Ronning C.M."/>
            <person name="Sundaram J.P."/>
            <person name="Sutton G."/>
            <person name="Turner G."/>
            <person name="Venter J.C."/>
            <person name="White O.R."/>
            <person name="Whitty B.R."/>
            <person name="Youngman P."/>
            <person name="Wolfe K.H."/>
            <person name="Goldman G.H."/>
            <person name="Wortman J.R."/>
            <person name="Jiang B."/>
            <person name="Denning D.W."/>
            <person name="Nierman W.C."/>
        </authorList>
    </citation>
    <scope>NUCLEOTIDE SEQUENCE [LARGE SCALE GENOMIC DNA]</scope>
    <source>
        <strain>ATCC 1007 / CBS 513.65 / DSM 816 / NCTC 3887 / NRRL 1 / QM 1276 / 107</strain>
    </source>
</reference>
<sequence length="728" mass="81112">MDSTPLAQPLVVDTDNKTPKHDLENGASTADTIEEHPAKKPRLENAPVTEKEEADAAPKRVKGIAPVKAEFIVQKSARPQPVEADNTVDADDAAEAASHQQRESEQKGKKKTSGQNKGRDFGQHNDAKGLCPSRAFSPEFSPKECKFGDRCRFEHDVRTYLKEHKRADLTTFGGICPLWEAKGRCPYGYKCRFVGSHMTERETADGRKELVLVEDETRKKAQPLVPHASEDGIVNAVSMEDKVAVARRKIKTPRSDAYLTWLDKTSKALEKNLHGRHFDDDAEGEVGADVKVSLEDVRAAYVEPPFLPSEKRRLYFGPETPALAPLTTQGNLPFRRLCTDLGAQFTYSEMAMGMSLIQGQKSEWALMKAHETEAIPPTISSGANIVQGYDNSQDLKFGAQIAANKPWHAIKATELLGRLTPHLRVIDLNCGCPIDQVYRDGAGSALLDHQSKLEKILRGMNAVSEAIPITVKIRTGTRDASPNALKLIERLTLGGHESSMLNIGPPGVAAITLHGRTRQQRYTKQADWSYIAECAALIKRLNEKTDEVTDTVREPDARTLPNGGKVYFLGNGDCYSHKDYEDHINNAGVDAVMVGRGAIIKPWVFEEIQTGQYLDKTATERLAYVEKFAKYGLDTWGSDEHGVGTTRRFMLEWLSFTQRYVPIGLLDYLPPNIQDRPPAWRGRNELETLLGSPNYKDWIKITEMFLGPAHKDFKFEPKHKSNAYEPQG</sequence>
<proteinExistence type="inferred from homology"/>
<comment type="function">
    <text evidence="1 3">Catalyzes the synthesis of dihydrouridine, a modified base found in the D-loop of most tRNAs. Specifically modifies U47 in cytoplasmic tRNAs (By similarity). Catalyzes the synthesis of dihydrouridine in some mRNAs, thereby affecting their translation (By similarity).</text>
</comment>
<comment type="catalytic activity">
    <reaction evidence="1">
        <text>5,6-dihydrouridine(47) in tRNA + NAD(+) = uridine(47) in tRNA + NADH + H(+)</text>
        <dbReference type="Rhea" id="RHEA:53364"/>
        <dbReference type="Rhea" id="RHEA-COMP:13539"/>
        <dbReference type="Rhea" id="RHEA-COMP:13540"/>
        <dbReference type="ChEBI" id="CHEBI:15378"/>
        <dbReference type="ChEBI" id="CHEBI:57540"/>
        <dbReference type="ChEBI" id="CHEBI:57945"/>
        <dbReference type="ChEBI" id="CHEBI:65315"/>
        <dbReference type="ChEBI" id="CHEBI:74443"/>
        <dbReference type="EC" id="1.3.1.89"/>
    </reaction>
    <physiologicalReaction direction="right-to-left" evidence="1">
        <dbReference type="Rhea" id="RHEA:53366"/>
    </physiologicalReaction>
</comment>
<comment type="catalytic activity">
    <reaction evidence="1">
        <text>5,6-dihydrouridine(47) in tRNA + NADP(+) = uridine(47) in tRNA + NADPH + H(+)</text>
        <dbReference type="Rhea" id="RHEA:53360"/>
        <dbReference type="Rhea" id="RHEA-COMP:13539"/>
        <dbReference type="Rhea" id="RHEA-COMP:13540"/>
        <dbReference type="ChEBI" id="CHEBI:15378"/>
        <dbReference type="ChEBI" id="CHEBI:57783"/>
        <dbReference type="ChEBI" id="CHEBI:58349"/>
        <dbReference type="ChEBI" id="CHEBI:65315"/>
        <dbReference type="ChEBI" id="CHEBI:74443"/>
        <dbReference type="EC" id="1.3.1.89"/>
    </reaction>
    <physiologicalReaction direction="right-to-left" evidence="1">
        <dbReference type="Rhea" id="RHEA:53362"/>
    </physiologicalReaction>
</comment>
<comment type="catalytic activity">
    <reaction evidence="3">
        <text>a 5,6-dihydrouridine in mRNA + NAD(+) = a uridine in mRNA + NADH + H(+)</text>
        <dbReference type="Rhea" id="RHEA:69851"/>
        <dbReference type="Rhea" id="RHEA-COMP:14658"/>
        <dbReference type="Rhea" id="RHEA-COMP:17789"/>
        <dbReference type="ChEBI" id="CHEBI:15378"/>
        <dbReference type="ChEBI" id="CHEBI:57540"/>
        <dbReference type="ChEBI" id="CHEBI:57945"/>
        <dbReference type="ChEBI" id="CHEBI:65315"/>
        <dbReference type="ChEBI" id="CHEBI:74443"/>
    </reaction>
    <physiologicalReaction direction="right-to-left" evidence="3">
        <dbReference type="Rhea" id="RHEA:69853"/>
    </physiologicalReaction>
</comment>
<comment type="catalytic activity">
    <reaction evidence="3">
        <text>a 5,6-dihydrouridine in mRNA + NADP(+) = a uridine in mRNA + NADPH + H(+)</text>
        <dbReference type="Rhea" id="RHEA:69855"/>
        <dbReference type="Rhea" id="RHEA-COMP:14658"/>
        <dbReference type="Rhea" id="RHEA-COMP:17789"/>
        <dbReference type="ChEBI" id="CHEBI:15378"/>
        <dbReference type="ChEBI" id="CHEBI:57783"/>
        <dbReference type="ChEBI" id="CHEBI:58349"/>
        <dbReference type="ChEBI" id="CHEBI:65315"/>
        <dbReference type="ChEBI" id="CHEBI:74443"/>
    </reaction>
    <physiologicalReaction direction="right-to-left" evidence="3">
        <dbReference type="Rhea" id="RHEA:69857"/>
    </physiologicalReaction>
</comment>
<comment type="cofactor">
    <cofactor evidence="2">
        <name>FMN</name>
        <dbReference type="ChEBI" id="CHEBI:58210"/>
    </cofactor>
</comment>
<comment type="subcellular location">
    <subcellularLocation>
        <location evidence="1">Cytoplasm</location>
    </subcellularLocation>
    <subcellularLocation>
        <location evidence="1">Nucleus</location>
    </subcellularLocation>
</comment>
<comment type="similarity">
    <text evidence="6">Belongs to the Dus family. Dus3 subfamily.</text>
</comment>
<protein>
    <recommendedName>
        <fullName>tRNA-dihydrouridine(47) synthase [NAD(P)(+)]</fullName>
        <ecNumber evidence="1">1.3.1.89</ecNumber>
    </recommendedName>
    <alternativeName>
        <fullName>mRNA-dihydrouridine synthase dus3</fullName>
        <ecNumber evidence="3">1.3.1.-</ecNumber>
    </alternativeName>
    <alternativeName>
        <fullName>tRNA-dihydrouridine synthase 3</fullName>
    </alternativeName>
</protein>
<gene>
    <name type="primary">dus3</name>
    <name type="ORF">ACLA_020610</name>
</gene>
<name>DUS3_ASPCL</name>
<accession>A1CNY3</accession>
<organism>
    <name type="scientific">Aspergillus clavatus (strain ATCC 1007 / CBS 513.65 / DSM 816 / NCTC 3887 / NRRL 1 / QM 1276 / 107)</name>
    <dbReference type="NCBI Taxonomy" id="344612"/>
    <lineage>
        <taxon>Eukaryota</taxon>
        <taxon>Fungi</taxon>
        <taxon>Dikarya</taxon>
        <taxon>Ascomycota</taxon>
        <taxon>Pezizomycotina</taxon>
        <taxon>Eurotiomycetes</taxon>
        <taxon>Eurotiomycetidae</taxon>
        <taxon>Eurotiales</taxon>
        <taxon>Aspergillaceae</taxon>
        <taxon>Aspergillus</taxon>
        <taxon>Aspergillus subgen. Fumigati</taxon>
    </lineage>
</organism>
<feature type="chain" id="PRO_0000330226" description="tRNA-dihydrouridine(47) synthase [NAD(P)(+)]">
    <location>
        <begin position="1"/>
        <end position="728"/>
    </location>
</feature>
<feature type="zinc finger region" description="C3H1-type 1" evidence="4">
    <location>
        <begin position="125"/>
        <end position="158"/>
    </location>
</feature>
<feature type="zinc finger region" description="C3H1-type 2" evidence="4">
    <location>
        <begin position="175"/>
        <end position="200"/>
    </location>
</feature>
<feature type="region of interest" description="Disordered" evidence="5">
    <location>
        <begin position="1"/>
        <end position="133"/>
    </location>
</feature>
<feature type="compositionally biased region" description="Basic and acidic residues" evidence="5">
    <location>
        <begin position="14"/>
        <end position="24"/>
    </location>
</feature>
<feature type="compositionally biased region" description="Basic and acidic residues" evidence="5">
    <location>
        <begin position="33"/>
        <end position="58"/>
    </location>
</feature>
<feature type="compositionally biased region" description="Basic and acidic residues" evidence="5">
    <location>
        <begin position="117"/>
        <end position="127"/>
    </location>
</feature>
<feature type="active site" description="Proton donor" evidence="2">
    <location>
        <position position="432"/>
    </location>
</feature>
<feature type="binding site" evidence="2">
    <location>
        <begin position="325"/>
        <end position="327"/>
    </location>
    <ligand>
        <name>FMN</name>
        <dbReference type="ChEBI" id="CHEBI:58210"/>
    </ligand>
</feature>
<feature type="binding site" evidence="2">
    <location>
        <position position="400"/>
    </location>
    <ligand>
        <name>FMN</name>
        <dbReference type="ChEBI" id="CHEBI:58210"/>
    </ligand>
</feature>
<feature type="binding site" evidence="2">
    <location>
        <position position="472"/>
    </location>
    <ligand>
        <name>FMN</name>
        <dbReference type="ChEBI" id="CHEBI:58210"/>
    </ligand>
</feature>
<feature type="binding site" evidence="2">
    <location>
        <position position="514"/>
    </location>
    <ligand>
        <name>FMN</name>
        <dbReference type="ChEBI" id="CHEBI:58210"/>
    </ligand>
</feature>
<feature type="binding site" evidence="2">
    <location>
        <begin position="571"/>
        <end position="573"/>
    </location>
    <ligand>
        <name>FMN</name>
        <dbReference type="ChEBI" id="CHEBI:58210"/>
    </ligand>
</feature>
<feature type="binding site" evidence="2">
    <location>
        <begin position="595"/>
        <end position="596"/>
    </location>
    <ligand>
        <name>FMN</name>
        <dbReference type="ChEBI" id="CHEBI:58210"/>
    </ligand>
</feature>
<keyword id="KW-0963">Cytoplasm</keyword>
<keyword id="KW-0285">Flavoprotein</keyword>
<keyword id="KW-0288">FMN</keyword>
<keyword id="KW-0479">Metal-binding</keyword>
<keyword id="KW-0507">mRNA processing</keyword>
<keyword id="KW-0520">NAD</keyword>
<keyword id="KW-0521">NADP</keyword>
<keyword id="KW-0539">Nucleus</keyword>
<keyword id="KW-0560">Oxidoreductase</keyword>
<keyword id="KW-1185">Reference proteome</keyword>
<keyword id="KW-0677">Repeat</keyword>
<keyword id="KW-0819">tRNA processing</keyword>
<keyword id="KW-0862">Zinc</keyword>
<keyword id="KW-0863">Zinc-finger</keyword>
<evidence type="ECO:0000250" key="1">
    <source>
        <dbReference type="UniProtKB" id="Q06053"/>
    </source>
</evidence>
<evidence type="ECO:0000250" key="2">
    <source>
        <dbReference type="UniProtKB" id="Q5SMC7"/>
    </source>
</evidence>
<evidence type="ECO:0000250" key="3">
    <source>
        <dbReference type="UniProtKB" id="Q9UTH9"/>
    </source>
</evidence>
<evidence type="ECO:0000255" key="4">
    <source>
        <dbReference type="PROSITE-ProRule" id="PRU00723"/>
    </source>
</evidence>
<evidence type="ECO:0000256" key="5">
    <source>
        <dbReference type="SAM" id="MobiDB-lite"/>
    </source>
</evidence>
<evidence type="ECO:0000305" key="6"/>